<name>TRPC_PSEPG</name>
<accession>B0KK35</accession>
<evidence type="ECO:0000255" key="1">
    <source>
        <dbReference type="HAMAP-Rule" id="MF_00134"/>
    </source>
</evidence>
<organism>
    <name type="scientific">Pseudomonas putida (strain GB-1)</name>
    <dbReference type="NCBI Taxonomy" id="76869"/>
    <lineage>
        <taxon>Bacteria</taxon>
        <taxon>Pseudomonadati</taxon>
        <taxon>Pseudomonadota</taxon>
        <taxon>Gammaproteobacteria</taxon>
        <taxon>Pseudomonadales</taxon>
        <taxon>Pseudomonadaceae</taxon>
        <taxon>Pseudomonas</taxon>
    </lineage>
</organism>
<protein>
    <recommendedName>
        <fullName evidence="1">Indole-3-glycerol phosphate synthase</fullName>
        <shortName evidence="1">IGPS</shortName>
        <ecNumber evidence="1">4.1.1.48</ecNumber>
    </recommendedName>
</protein>
<dbReference type="EC" id="4.1.1.48" evidence="1"/>
<dbReference type="EMBL" id="CP000926">
    <property type="protein sequence ID" value="ABY96363.1"/>
    <property type="molecule type" value="Genomic_DNA"/>
</dbReference>
<dbReference type="RefSeq" id="WP_012270216.1">
    <property type="nucleotide sequence ID" value="NC_010322.1"/>
</dbReference>
<dbReference type="SMR" id="B0KK35"/>
<dbReference type="KEGG" id="ppg:PputGB1_0452"/>
<dbReference type="eggNOG" id="COG0134">
    <property type="taxonomic scope" value="Bacteria"/>
</dbReference>
<dbReference type="HOGENOM" id="CLU_034247_2_0_6"/>
<dbReference type="UniPathway" id="UPA00035">
    <property type="reaction ID" value="UER00043"/>
</dbReference>
<dbReference type="Proteomes" id="UP000002157">
    <property type="component" value="Chromosome"/>
</dbReference>
<dbReference type="GO" id="GO:0004425">
    <property type="term" value="F:indole-3-glycerol-phosphate synthase activity"/>
    <property type="evidence" value="ECO:0007669"/>
    <property type="project" value="UniProtKB-UniRule"/>
</dbReference>
<dbReference type="GO" id="GO:0004640">
    <property type="term" value="F:phosphoribosylanthranilate isomerase activity"/>
    <property type="evidence" value="ECO:0007669"/>
    <property type="project" value="TreeGrafter"/>
</dbReference>
<dbReference type="GO" id="GO:0000162">
    <property type="term" value="P:L-tryptophan biosynthetic process"/>
    <property type="evidence" value="ECO:0007669"/>
    <property type="project" value="UniProtKB-UniRule"/>
</dbReference>
<dbReference type="CDD" id="cd00331">
    <property type="entry name" value="IGPS"/>
    <property type="match status" value="1"/>
</dbReference>
<dbReference type="FunFam" id="3.20.20.70:FF:000024">
    <property type="entry name" value="Indole-3-glycerol phosphate synthase"/>
    <property type="match status" value="1"/>
</dbReference>
<dbReference type="Gene3D" id="3.20.20.70">
    <property type="entry name" value="Aldolase class I"/>
    <property type="match status" value="1"/>
</dbReference>
<dbReference type="HAMAP" id="MF_00134_B">
    <property type="entry name" value="IGPS_B"/>
    <property type="match status" value="1"/>
</dbReference>
<dbReference type="InterPro" id="IPR013785">
    <property type="entry name" value="Aldolase_TIM"/>
</dbReference>
<dbReference type="InterPro" id="IPR045186">
    <property type="entry name" value="Indole-3-glycerol_P_synth"/>
</dbReference>
<dbReference type="InterPro" id="IPR013798">
    <property type="entry name" value="Indole-3-glycerol_P_synth_dom"/>
</dbReference>
<dbReference type="InterPro" id="IPR001468">
    <property type="entry name" value="Indole-3-GlycerolPSynthase_CS"/>
</dbReference>
<dbReference type="InterPro" id="IPR011060">
    <property type="entry name" value="RibuloseP-bd_barrel"/>
</dbReference>
<dbReference type="NCBIfam" id="NF001370">
    <property type="entry name" value="PRK00278.1-2"/>
    <property type="match status" value="1"/>
</dbReference>
<dbReference type="NCBIfam" id="NF001373">
    <property type="entry name" value="PRK00278.1-6"/>
    <property type="match status" value="1"/>
</dbReference>
<dbReference type="NCBIfam" id="NF001377">
    <property type="entry name" value="PRK00278.2-4"/>
    <property type="match status" value="1"/>
</dbReference>
<dbReference type="PANTHER" id="PTHR22854:SF2">
    <property type="entry name" value="INDOLE-3-GLYCEROL-PHOSPHATE SYNTHASE"/>
    <property type="match status" value="1"/>
</dbReference>
<dbReference type="PANTHER" id="PTHR22854">
    <property type="entry name" value="TRYPTOPHAN BIOSYNTHESIS PROTEIN"/>
    <property type="match status" value="1"/>
</dbReference>
<dbReference type="Pfam" id="PF00218">
    <property type="entry name" value="IGPS"/>
    <property type="match status" value="1"/>
</dbReference>
<dbReference type="SUPFAM" id="SSF51366">
    <property type="entry name" value="Ribulose-phoshate binding barrel"/>
    <property type="match status" value="1"/>
</dbReference>
<dbReference type="PROSITE" id="PS00614">
    <property type="entry name" value="IGPS"/>
    <property type="match status" value="1"/>
</dbReference>
<feature type="chain" id="PRO_1000076424" description="Indole-3-glycerol phosphate synthase">
    <location>
        <begin position="1"/>
        <end position="277"/>
    </location>
</feature>
<sequence>MSVPTVLERIIARKFQEVAERSARVSLAELEALAKAADAPRGFANALIEQAKRKQPAVIAEIKKASPSKGVIREHFVPAEIAVSYEKGGATCLSVLTDVDYFQGADVYLQQARAAVSLPVIRKDFMVDPYQIVEARALGADCVLLIVSALDDVKMAELAATAKDVGLDVLVEVHDGDELERALKTLDTPLVGVNNRNLHTFEVSLETTLDLLPRIPRDRLAITESGILNRADVELMAINEVYSFLVGEAFMRAEQPGLELQRLFFPEQVKKTVQPLD</sequence>
<proteinExistence type="inferred from homology"/>
<comment type="catalytic activity">
    <reaction evidence="1">
        <text>1-(2-carboxyphenylamino)-1-deoxy-D-ribulose 5-phosphate + H(+) = (1S,2R)-1-C-(indol-3-yl)glycerol 3-phosphate + CO2 + H2O</text>
        <dbReference type="Rhea" id="RHEA:23476"/>
        <dbReference type="ChEBI" id="CHEBI:15377"/>
        <dbReference type="ChEBI" id="CHEBI:15378"/>
        <dbReference type="ChEBI" id="CHEBI:16526"/>
        <dbReference type="ChEBI" id="CHEBI:58613"/>
        <dbReference type="ChEBI" id="CHEBI:58866"/>
        <dbReference type="EC" id="4.1.1.48"/>
    </reaction>
</comment>
<comment type="pathway">
    <text evidence="1">Amino-acid biosynthesis; L-tryptophan biosynthesis; L-tryptophan from chorismate: step 4/5.</text>
</comment>
<comment type="similarity">
    <text evidence="1">Belongs to the TrpC family.</text>
</comment>
<keyword id="KW-0028">Amino-acid biosynthesis</keyword>
<keyword id="KW-0057">Aromatic amino acid biosynthesis</keyword>
<keyword id="KW-0210">Decarboxylase</keyword>
<keyword id="KW-0456">Lyase</keyword>
<keyword id="KW-0822">Tryptophan biosynthesis</keyword>
<reference key="1">
    <citation type="submission" date="2008-01" db="EMBL/GenBank/DDBJ databases">
        <title>Complete sequence of Pseudomonas putida GB-1.</title>
        <authorList>
            <consortium name="US DOE Joint Genome Institute"/>
            <person name="Copeland A."/>
            <person name="Lucas S."/>
            <person name="Lapidus A."/>
            <person name="Barry K."/>
            <person name="Glavina del Rio T."/>
            <person name="Dalin E."/>
            <person name="Tice H."/>
            <person name="Pitluck S."/>
            <person name="Bruce D."/>
            <person name="Goodwin L."/>
            <person name="Chertkov O."/>
            <person name="Brettin T."/>
            <person name="Detter J.C."/>
            <person name="Han C."/>
            <person name="Kuske C.R."/>
            <person name="Schmutz J."/>
            <person name="Larimer F."/>
            <person name="Land M."/>
            <person name="Hauser L."/>
            <person name="Kyrpides N."/>
            <person name="Kim E."/>
            <person name="McCarthy J.K."/>
            <person name="Richardson P."/>
        </authorList>
    </citation>
    <scope>NUCLEOTIDE SEQUENCE [LARGE SCALE GENOMIC DNA]</scope>
    <source>
        <strain>GB-1</strain>
    </source>
</reference>
<gene>
    <name evidence="1" type="primary">trpC</name>
    <name type="ordered locus">PputGB1_0452</name>
</gene>